<evidence type="ECO:0000250" key="1"/>
<evidence type="ECO:0000305" key="2"/>
<proteinExistence type="inferred from homology"/>
<feature type="chain" id="PRO_0000136114" description="Histidine--tRNA ligase">
    <location>
        <begin position="1"/>
        <end position="466"/>
    </location>
</feature>
<name>SYH_BIFLO</name>
<protein>
    <recommendedName>
        <fullName>Histidine--tRNA ligase</fullName>
        <ecNumber>6.1.1.21</ecNumber>
    </recommendedName>
    <alternativeName>
        <fullName>Histidyl-tRNA synthetase</fullName>
        <shortName>HisRS</shortName>
    </alternativeName>
</protein>
<reference key="1">
    <citation type="journal article" date="2002" name="Proc. Natl. Acad. Sci. U.S.A.">
        <title>The genome sequence of Bifidobacterium longum reflects its adaptation to the human gastrointestinal tract.</title>
        <authorList>
            <person name="Schell M.A."/>
            <person name="Karmirantzou M."/>
            <person name="Snel B."/>
            <person name="Vilanova D."/>
            <person name="Berger B."/>
            <person name="Pessi G."/>
            <person name="Zwahlen M.-C."/>
            <person name="Desiere F."/>
            <person name="Bork P."/>
            <person name="Delley M."/>
            <person name="Pridmore R.D."/>
            <person name="Arigoni F."/>
        </authorList>
    </citation>
    <scope>NUCLEOTIDE SEQUENCE [LARGE SCALE GENOMIC DNA]</scope>
    <source>
        <strain>NCC 2705</strain>
    </source>
</reference>
<gene>
    <name type="primary">hisS</name>
    <name type="ordered locus">BL0017</name>
</gene>
<keyword id="KW-0030">Aminoacyl-tRNA synthetase</keyword>
<keyword id="KW-0067">ATP-binding</keyword>
<keyword id="KW-0963">Cytoplasm</keyword>
<keyword id="KW-0436">Ligase</keyword>
<keyword id="KW-0547">Nucleotide-binding</keyword>
<keyword id="KW-0648">Protein biosynthesis</keyword>
<keyword id="KW-1185">Reference proteome</keyword>
<organism>
    <name type="scientific">Bifidobacterium longum (strain NCC 2705)</name>
    <dbReference type="NCBI Taxonomy" id="206672"/>
    <lineage>
        <taxon>Bacteria</taxon>
        <taxon>Bacillati</taxon>
        <taxon>Actinomycetota</taxon>
        <taxon>Actinomycetes</taxon>
        <taxon>Bifidobacteriales</taxon>
        <taxon>Bifidobacteriaceae</taxon>
        <taxon>Bifidobacterium</taxon>
    </lineage>
</organism>
<sequence>MAKGASISGFPEWLPSERVVEQRVIDTLRKVFELNGFIGIETRAVETGASLLKKGETSKEIYLLSRLQEVGHESDTPIEERLGLHFDLTVPLSRYVVEHSGALAFPFKRWQIQKVWRGERPQEGRFREFVQADIDVIGAGDLPDHYEVELPLVMVSALEELRAYGLPKATVHANNRKLSEGFYRGLGLTDVEGVLREIDKLDKIGADEVARLLTETCGATEAQARACLELAELTASDGAELAAKFDALCEAHGIVKDSEAYTLARQGLDTLAMIVDEAAAIRPGSVIADLKIARGLDYYTGSVYETFLDGAASLGSICSGGRYDNLASQGNRKYPGVGLSIGLSRLVSYMLHTAGAHANRVSPAAVLVAVWNEEDRPAANRIANQLRARGIATDVAPTAAKLGKQIKYADKLGIPYVWFPATAAEGAEGAEPAGDEVKNIVTGEQVAADCTSWEPDTVVAQQTVEI</sequence>
<accession>Q8G864</accession>
<dbReference type="EC" id="6.1.1.21"/>
<dbReference type="EMBL" id="AE014295">
    <property type="protein sequence ID" value="AAN23884.1"/>
    <property type="molecule type" value="Genomic_DNA"/>
</dbReference>
<dbReference type="RefSeq" id="NP_695248.1">
    <property type="nucleotide sequence ID" value="NC_004307.2"/>
</dbReference>
<dbReference type="RefSeq" id="WP_008782706.1">
    <property type="nucleotide sequence ID" value="NC_004307.2"/>
</dbReference>
<dbReference type="SMR" id="Q8G864"/>
<dbReference type="STRING" id="206672.BL0017"/>
<dbReference type="EnsemblBacteria" id="AAN23884">
    <property type="protein sequence ID" value="AAN23884"/>
    <property type="gene ID" value="BL0017"/>
</dbReference>
<dbReference type="KEGG" id="blo:BL0017"/>
<dbReference type="PATRIC" id="fig|206672.9.peg.18"/>
<dbReference type="HOGENOM" id="CLU_025113_3_0_11"/>
<dbReference type="OrthoDB" id="9800814at2"/>
<dbReference type="PhylomeDB" id="Q8G864"/>
<dbReference type="Proteomes" id="UP000000439">
    <property type="component" value="Chromosome"/>
</dbReference>
<dbReference type="GO" id="GO:0005737">
    <property type="term" value="C:cytoplasm"/>
    <property type="evidence" value="ECO:0007669"/>
    <property type="project" value="UniProtKB-SubCell"/>
</dbReference>
<dbReference type="GO" id="GO:0005524">
    <property type="term" value="F:ATP binding"/>
    <property type="evidence" value="ECO:0007669"/>
    <property type="project" value="UniProtKB-UniRule"/>
</dbReference>
<dbReference type="GO" id="GO:0004821">
    <property type="term" value="F:histidine-tRNA ligase activity"/>
    <property type="evidence" value="ECO:0007669"/>
    <property type="project" value="UniProtKB-UniRule"/>
</dbReference>
<dbReference type="GO" id="GO:0006427">
    <property type="term" value="P:histidyl-tRNA aminoacylation"/>
    <property type="evidence" value="ECO:0007669"/>
    <property type="project" value="UniProtKB-UniRule"/>
</dbReference>
<dbReference type="CDD" id="cd00773">
    <property type="entry name" value="HisRS-like_core"/>
    <property type="match status" value="1"/>
</dbReference>
<dbReference type="Gene3D" id="3.40.50.800">
    <property type="entry name" value="Anticodon-binding domain"/>
    <property type="match status" value="1"/>
</dbReference>
<dbReference type="Gene3D" id="3.30.930.10">
    <property type="entry name" value="Bira Bifunctional Protein, Domain 2"/>
    <property type="match status" value="1"/>
</dbReference>
<dbReference type="HAMAP" id="MF_00127">
    <property type="entry name" value="His_tRNA_synth"/>
    <property type="match status" value="1"/>
</dbReference>
<dbReference type="InterPro" id="IPR006195">
    <property type="entry name" value="aa-tRNA-synth_II"/>
</dbReference>
<dbReference type="InterPro" id="IPR045864">
    <property type="entry name" value="aa-tRNA-synth_II/BPL/LPL"/>
</dbReference>
<dbReference type="InterPro" id="IPR004154">
    <property type="entry name" value="Anticodon-bd"/>
</dbReference>
<dbReference type="InterPro" id="IPR036621">
    <property type="entry name" value="Anticodon-bd_dom_sf"/>
</dbReference>
<dbReference type="InterPro" id="IPR015807">
    <property type="entry name" value="His-tRNA-ligase"/>
</dbReference>
<dbReference type="InterPro" id="IPR041715">
    <property type="entry name" value="HisRS-like_core"/>
</dbReference>
<dbReference type="InterPro" id="IPR004516">
    <property type="entry name" value="HisRS/HisZ"/>
</dbReference>
<dbReference type="NCBIfam" id="TIGR00442">
    <property type="entry name" value="hisS"/>
    <property type="match status" value="1"/>
</dbReference>
<dbReference type="PANTHER" id="PTHR11476:SF7">
    <property type="entry name" value="HISTIDINE--TRNA LIGASE"/>
    <property type="match status" value="1"/>
</dbReference>
<dbReference type="PANTHER" id="PTHR11476">
    <property type="entry name" value="HISTIDYL-TRNA SYNTHETASE"/>
    <property type="match status" value="1"/>
</dbReference>
<dbReference type="Pfam" id="PF03129">
    <property type="entry name" value="HGTP_anticodon"/>
    <property type="match status" value="1"/>
</dbReference>
<dbReference type="Pfam" id="PF13393">
    <property type="entry name" value="tRNA-synt_His"/>
    <property type="match status" value="1"/>
</dbReference>
<dbReference type="PIRSF" id="PIRSF001549">
    <property type="entry name" value="His-tRNA_synth"/>
    <property type="match status" value="1"/>
</dbReference>
<dbReference type="SUPFAM" id="SSF52954">
    <property type="entry name" value="Class II aaRS ABD-related"/>
    <property type="match status" value="1"/>
</dbReference>
<dbReference type="SUPFAM" id="SSF55681">
    <property type="entry name" value="Class II aaRS and biotin synthetases"/>
    <property type="match status" value="1"/>
</dbReference>
<dbReference type="PROSITE" id="PS50862">
    <property type="entry name" value="AA_TRNA_LIGASE_II"/>
    <property type="match status" value="1"/>
</dbReference>
<comment type="catalytic activity">
    <reaction>
        <text>tRNA(His) + L-histidine + ATP = L-histidyl-tRNA(His) + AMP + diphosphate + H(+)</text>
        <dbReference type="Rhea" id="RHEA:17313"/>
        <dbReference type="Rhea" id="RHEA-COMP:9665"/>
        <dbReference type="Rhea" id="RHEA-COMP:9689"/>
        <dbReference type="ChEBI" id="CHEBI:15378"/>
        <dbReference type="ChEBI" id="CHEBI:30616"/>
        <dbReference type="ChEBI" id="CHEBI:33019"/>
        <dbReference type="ChEBI" id="CHEBI:57595"/>
        <dbReference type="ChEBI" id="CHEBI:78442"/>
        <dbReference type="ChEBI" id="CHEBI:78527"/>
        <dbReference type="ChEBI" id="CHEBI:456215"/>
        <dbReference type="EC" id="6.1.1.21"/>
    </reaction>
</comment>
<comment type="subunit">
    <text evidence="1">Homodimer.</text>
</comment>
<comment type="subcellular location">
    <subcellularLocation>
        <location evidence="1">Cytoplasm</location>
    </subcellularLocation>
</comment>
<comment type="similarity">
    <text evidence="2">Belongs to the class-II aminoacyl-tRNA synthetase family.</text>
</comment>